<accession>Q8D2J7</accession>
<feature type="chain" id="PRO_0000150338" description="Cysteine desulfurase">
    <location>
        <begin position="1"/>
        <end position="410"/>
    </location>
</feature>
<feature type="active site" description="Cysteine persulfide intermediate" evidence="1">
    <location>
        <position position="365"/>
    </location>
</feature>
<feature type="modified residue" description="N6-(pyridoxal phosphate)lysine" evidence="1">
    <location>
        <position position="227"/>
    </location>
</feature>
<name>SUFS_WIGBR</name>
<organism>
    <name type="scientific">Wigglesworthia glossinidia brevipalpis</name>
    <dbReference type="NCBI Taxonomy" id="36870"/>
    <lineage>
        <taxon>Bacteria</taxon>
        <taxon>Pseudomonadati</taxon>
        <taxon>Pseudomonadota</taxon>
        <taxon>Gammaproteobacteria</taxon>
        <taxon>Enterobacterales</taxon>
        <taxon>Erwiniaceae</taxon>
        <taxon>Wigglesworthia</taxon>
    </lineage>
</organism>
<reference key="1">
    <citation type="journal article" date="2002" name="Nat. Genet.">
        <title>Genome sequence of the endocellular obligate symbiont of tsetse flies, Wigglesworthia glossinidia.</title>
        <authorList>
            <person name="Akman L."/>
            <person name="Yamashita A."/>
            <person name="Watanabe H."/>
            <person name="Oshima K."/>
            <person name="Shiba T."/>
            <person name="Hattori M."/>
            <person name="Aksoy S."/>
        </authorList>
    </citation>
    <scope>NUCLEOTIDE SEQUENCE [LARGE SCALE GENOMIC DNA]</scope>
</reference>
<evidence type="ECO:0000255" key="1">
    <source>
        <dbReference type="HAMAP-Rule" id="MF_01831"/>
    </source>
</evidence>
<keyword id="KW-0963">Cytoplasm</keyword>
<keyword id="KW-0456">Lyase</keyword>
<keyword id="KW-0663">Pyridoxal phosphate</keyword>
<keyword id="KW-1185">Reference proteome</keyword>
<keyword id="KW-0808">Transferase</keyword>
<sequence>MNYPIKEIRSDFPILSEKINNSPLIYLDNAASSQKPKCVLQREIIYSSKEHSAVHRGIHTLSKNATKNMEDIRSKIAKFINAKSDSEIIFVKGTTEGINLVANTWGETFIKKGDNIVITQMEHHANIVPWQLLSMRKKVDIKYIPLLPSGKLDICKIDDIINNNTRIFCITHVSNILGTCNLIEKIIKKIKNNYDIKVLIDGAQAIMHMKIDVQKIDCDFYVFSGHKIYGPSGIGVLYGKKKLLKKMPPWEGGGGMIKKVCLFSGTTFNEIPWRFEAGSPNISGIIGLGKSIEYVKKIGIKKIQKYEKKLIKYALLKIKNIPNIKIYSSEINTSIIPFNLKGCHSYDVGILLDKYGVAIRTGHHCSMPIMNFFKVHSMCRISVAMYSDESDIDNFIKSLLKVQKFLRRFN</sequence>
<proteinExistence type="inferred from homology"/>
<protein>
    <recommendedName>
        <fullName evidence="1">Cysteine desulfurase</fullName>
        <ecNumber evidence="1">2.8.1.7</ecNumber>
    </recommendedName>
    <alternativeName>
        <fullName evidence="1">Selenocysteine beta-lyase</fullName>
        <shortName evidence="1">SCL</shortName>
    </alternativeName>
    <alternativeName>
        <fullName evidence="1">Selenocysteine lyase</fullName>
        <ecNumber evidence="1">4.4.1.16</ecNumber>
    </alternativeName>
    <alternativeName>
        <fullName evidence="1">Selenocysteine reductase</fullName>
    </alternativeName>
</protein>
<dbReference type="EC" id="2.8.1.7" evidence="1"/>
<dbReference type="EC" id="4.4.1.16" evidence="1"/>
<dbReference type="EMBL" id="BA000021">
    <property type="protein sequence ID" value="BAC24503.1"/>
    <property type="molecule type" value="Genomic_DNA"/>
</dbReference>
<dbReference type="SMR" id="Q8D2J7"/>
<dbReference type="STRING" id="36870.gene:10368857"/>
<dbReference type="KEGG" id="wbr:b1680"/>
<dbReference type="eggNOG" id="COG0520">
    <property type="taxonomic scope" value="Bacteria"/>
</dbReference>
<dbReference type="HOGENOM" id="CLU_003433_2_5_6"/>
<dbReference type="OrthoDB" id="9808002at2"/>
<dbReference type="UniPathway" id="UPA00266"/>
<dbReference type="Proteomes" id="UP000000562">
    <property type="component" value="Chromosome"/>
</dbReference>
<dbReference type="GO" id="GO:0005737">
    <property type="term" value="C:cytoplasm"/>
    <property type="evidence" value="ECO:0007669"/>
    <property type="project" value="UniProtKB-SubCell"/>
</dbReference>
<dbReference type="GO" id="GO:0031071">
    <property type="term" value="F:cysteine desulfurase activity"/>
    <property type="evidence" value="ECO:0007669"/>
    <property type="project" value="UniProtKB-UniRule"/>
</dbReference>
<dbReference type="GO" id="GO:0030170">
    <property type="term" value="F:pyridoxal phosphate binding"/>
    <property type="evidence" value="ECO:0007669"/>
    <property type="project" value="InterPro"/>
</dbReference>
<dbReference type="GO" id="GO:0009000">
    <property type="term" value="F:selenocysteine lyase activity"/>
    <property type="evidence" value="ECO:0007669"/>
    <property type="project" value="UniProtKB-UniRule"/>
</dbReference>
<dbReference type="GO" id="GO:0006534">
    <property type="term" value="P:cysteine metabolic process"/>
    <property type="evidence" value="ECO:0007669"/>
    <property type="project" value="InterPro"/>
</dbReference>
<dbReference type="CDD" id="cd06453">
    <property type="entry name" value="SufS_like"/>
    <property type="match status" value="1"/>
</dbReference>
<dbReference type="Gene3D" id="3.90.1150.10">
    <property type="entry name" value="Aspartate Aminotransferase, domain 1"/>
    <property type="match status" value="1"/>
</dbReference>
<dbReference type="Gene3D" id="3.40.640.10">
    <property type="entry name" value="Type I PLP-dependent aspartate aminotransferase-like (Major domain)"/>
    <property type="match status" value="1"/>
</dbReference>
<dbReference type="HAMAP" id="MF_01831">
    <property type="entry name" value="SufS_aminotrans_5"/>
    <property type="match status" value="1"/>
</dbReference>
<dbReference type="InterPro" id="IPR000192">
    <property type="entry name" value="Aminotrans_V_dom"/>
</dbReference>
<dbReference type="InterPro" id="IPR020578">
    <property type="entry name" value="Aminotrans_V_PyrdxlP_BS"/>
</dbReference>
<dbReference type="InterPro" id="IPR010970">
    <property type="entry name" value="Cys_dSase_SufS"/>
</dbReference>
<dbReference type="InterPro" id="IPR015424">
    <property type="entry name" value="PyrdxlP-dep_Trfase"/>
</dbReference>
<dbReference type="InterPro" id="IPR015421">
    <property type="entry name" value="PyrdxlP-dep_Trfase_major"/>
</dbReference>
<dbReference type="InterPro" id="IPR015422">
    <property type="entry name" value="PyrdxlP-dep_Trfase_small"/>
</dbReference>
<dbReference type="NCBIfam" id="TIGR01979">
    <property type="entry name" value="sufS"/>
    <property type="match status" value="1"/>
</dbReference>
<dbReference type="PANTHER" id="PTHR43586">
    <property type="entry name" value="CYSTEINE DESULFURASE"/>
    <property type="match status" value="1"/>
</dbReference>
<dbReference type="PANTHER" id="PTHR43586:SF25">
    <property type="entry name" value="CYSTEINE DESULFURASE"/>
    <property type="match status" value="1"/>
</dbReference>
<dbReference type="Pfam" id="PF00266">
    <property type="entry name" value="Aminotran_5"/>
    <property type="match status" value="1"/>
</dbReference>
<dbReference type="SUPFAM" id="SSF53383">
    <property type="entry name" value="PLP-dependent transferases"/>
    <property type="match status" value="1"/>
</dbReference>
<dbReference type="PROSITE" id="PS00595">
    <property type="entry name" value="AA_TRANSFER_CLASS_5"/>
    <property type="match status" value="1"/>
</dbReference>
<gene>
    <name evidence="1" type="primary">sufS</name>
    <name type="ordered locus">WIGBR3570</name>
</gene>
<comment type="function">
    <text evidence="1">Cysteine desulfurases mobilize the sulfur from L-cysteine to yield L-alanine, an essential step in sulfur metabolism for biosynthesis of a variety of sulfur-containing biomolecules. Component of the suf operon, which is activated and required under specific conditions such as oxidative stress and iron limitation. Acts as a potent selenocysteine lyase in vitro, that mobilizes selenium from L-selenocysteine. Selenocysteine lyase activity is however unsure in vivo.</text>
</comment>
<comment type="catalytic activity">
    <reaction evidence="1">
        <text>(sulfur carrier)-H + L-cysteine = (sulfur carrier)-SH + L-alanine</text>
        <dbReference type="Rhea" id="RHEA:43892"/>
        <dbReference type="Rhea" id="RHEA-COMP:14737"/>
        <dbReference type="Rhea" id="RHEA-COMP:14739"/>
        <dbReference type="ChEBI" id="CHEBI:29917"/>
        <dbReference type="ChEBI" id="CHEBI:35235"/>
        <dbReference type="ChEBI" id="CHEBI:57972"/>
        <dbReference type="ChEBI" id="CHEBI:64428"/>
        <dbReference type="EC" id="2.8.1.7"/>
    </reaction>
</comment>
<comment type="catalytic activity">
    <reaction evidence="1">
        <text>L-selenocysteine + AH2 = hydrogenselenide + L-alanine + A + H(+)</text>
        <dbReference type="Rhea" id="RHEA:11632"/>
        <dbReference type="ChEBI" id="CHEBI:13193"/>
        <dbReference type="ChEBI" id="CHEBI:15378"/>
        <dbReference type="ChEBI" id="CHEBI:17499"/>
        <dbReference type="ChEBI" id="CHEBI:29317"/>
        <dbReference type="ChEBI" id="CHEBI:57843"/>
        <dbReference type="ChEBI" id="CHEBI:57972"/>
        <dbReference type="EC" id="4.4.1.16"/>
    </reaction>
</comment>
<comment type="cofactor">
    <cofactor evidence="1">
        <name>pyridoxal 5'-phosphate</name>
        <dbReference type="ChEBI" id="CHEBI:597326"/>
    </cofactor>
</comment>
<comment type="pathway">
    <text evidence="1">Cofactor biosynthesis; iron-sulfur cluster biosynthesis.</text>
</comment>
<comment type="subunit">
    <text evidence="1">Homodimer. Interacts with SufE and the SufBCD complex composed of SufB, SufC and SufD. The interaction with SufE is required to mediate the direct transfer of the sulfur atom from the S-sulfanylcysteine.</text>
</comment>
<comment type="subcellular location">
    <subcellularLocation>
        <location evidence="1">Cytoplasm</location>
    </subcellularLocation>
</comment>
<comment type="similarity">
    <text evidence="1">Belongs to the class-V pyridoxal-phosphate-dependent aminotransferase family. Csd subfamily.</text>
</comment>